<dbReference type="EMBL" id="BC021460">
    <property type="protein sequence ID" value="AAH21460.1"/>
    <property type="molecule type" value="mRNA"/>
</dbReference>
<dbReference type="CCDS" id="CCDS22202.1"/>
<dbReference type="RefSeq" id="NP_080308.1">
    <property type="nucleotide sequence ID" value="NM_026032.1"/>
</dbReference>
<dbReference type="SMR" id="Q8VC85"/>
<dbReference type="BioGRID" id="212017">
    <property type="interactions" value="12"/>
</dbReference>
<dbReference type="DIP" id="DIP-60113N"/>
<dbReference type="FunCoup" id="Q8VC85">
    <property type="interactions" value="2485"/>
</dbReference>
<dbReference type="IntAct" id="Q8VC85">
    <property type="interactions" value="1"/>
</dbReference>
<dbReference type="STRING" id="10090.ENSMUSP00000041022"/>
<dbReference type="iPTMnet" id="Q8VC85"/>
<dbReference type="PhosphoSitePlus" id="Q8VC85"/>
<dbReference type="REPRODUCTION-2DPAGE" id="Q8VC85"/>
<dbReference type="PaxDb" id="10090-ENSMUSP00000041022"/>
<dbReference type="ProteomicsDB" id="292046"/>
<dbReference type="Pumba" id="Q8VC85"/>
<dbReference type="Antibodypedia" id="10914">
    <property type="antibodies" value="326 antibodies from 30 providers"/>
</dbReference>
<dbReference type="DNASU" id="67207"/>
<dbReference type="Ensembl" id="ENSMUST00000038421.8">
    <property type="protein sequence ID" value="ENSMUSP00000041022.7"/>
    <property type="gene ID" value="ENSMUSG00000037296.8"/>
</dbReference>
<dbReference type="GeneID" id="67207"/>
<dbReference type="KEGG" id="mmu:67207"/>
<dbReference type="UCSC" id="uc009lgz.1">
    <property type="organism name" value="mouse"/>
</dbReference>
<dbReference type="AGR" id="MGI:1914457"/>
<dbReference type="CTD" id="27257"/>
<dbReference type="MGI" id="MGI:1914457">
    <property type="gene designation" value="Lsm1"/>
</dbReference>
<dbReference type="VEuPathDB" id="HostDB:ENSMUSG00000037296"/>
<dbReference type="eggNOG" id="KOG1782">
    <property type="taxonomic scope" value="Eukaryota"/>
</dbReference>
<dbReference type="GeneTree" id="ENSGT00730000111133"/>
<dbReference type="HOGENOM" id="CLU_076902_0_1_1"/>
<dbReference type="InParanoid" id="Q8VC85"/>
<dbReference type="OMA" id="IGYLRCV"/>
<dbReference type="OrthoDB" id="422364at2759"/>
<dbReference type="PhylomeDB" id="Q8VC85"/>
<dbReference type="TreeFam" id="TF105846"/>
<dbReference type="Reactome" id="R-MMU-430039">
    <property type="pathway name" value="mRNA decay by 5' to 3' exoribonuclease"/>
</dbReference>
<dbReference type="BioGRID-ORCS" id="67207">
    <property type="hits" value="8 hits in 77 CRISPR screens"/>
</dbReference>
<dbReference type="ChiTaRS" id="Lsm1">
    <property type="organism name" value="mouse"/>
</dbReference>
<dbReference type="PRO" id="PR:Q8VC85"/>
<dbReference type="Proteomes" id="UP000000589">
    <property type="component" value="Chromosome 8"/>
</dbReference>
<dbReference type="RNAct" id="Q8VC85">
    <property type="molecule type" value="protein"/>
</dbReference>
<dbReference type="Bgee" id="ENSMUSG00000037296">
    <property type="expression patterns" value="Expressed in renal corpuscle and 264 other cell types or tissues"/>
</dbReference>
<dbReference type="ExpressionAtlas" id="Q8VC85">
    <property type="expression patterns" value="baseline and differential"/>
</dbReference>
<dbReference type="GO" id="GO:0005737">
    <property type="term" value="C:cytoplasm"/>
    <property type="evidence" value="ECO:0000250"/>
    <property type="project" value="MGI"/>
</dbReference>
<dbReference type="GO" id="GO:0005634">
    <property type="term" value="C:nucleus"/>
    <property type="evidence" value="ECO:0000250"/>
    <property type="project" value="MGI"/>
</dbReference>
<dbReference type="GO" id="GO:0000932">
    <property type="term" value="C:P-body"/>
    <property type="evidence" value="ECO:0000314"/>
    <property type="project" value="MGI"/>
</dbReference>
<dbReference type="GO" id="GO:1990904">
    <property type="term" value="C:ribonucleoprotein complex"/>
    <property type="evidence" value="ECO:0007669"/>
    <property type="project" value="UniProtKB-KW"/>
</dbReference>
<dbReference type="GO" id="GO:0003723">
    <property type="term" value="F:RNA binding"/>
    <property type="evidence" value="ECO:0007669"/>
    <property type="project" value="UniProtKB-KW"/>
</dbReference>
<dbReference type="GO" id="GO:0071044">
    <property type="term" value="P:histone mRNA catabolic process"/>
    <property type="evidence" value="ECO:0000250"/>
    <property type="project" value="UniProtKB"/>
</dbReference>
<dbReference type="GO" id="GO:0006397">
    <property type="term" value="P:mRNA processing"/>
    <property type="evidence" value="ECO:0007669"/>
    <property type="project" value="UniProtKB-KW"/>
</dbReference>
<dbReference type="GO" id="GO:0045665">
    <property type="term" value="P:negative regulation of neuron differentiation"/>
    <property type="evidence" value="ECO:0000315"/>
    <property type="project" value="MGI"/>
</dbReference>
<dbReference type="GO" id="GO:0030182">
    <property type="term" value="P:neuron differentiation"/>
    <property type="evidence" value="ECO:0000315"/>
    <property type="project" value="MGI"/>
</dbReference>
<dbReference type="GO" id="GO:0008380">
    <property type="term" value="P:RNA splicing"/>
    <property type="evidence" value="ECO:0007669"/>
    <property type="project" value="UniProtKB-KW"/>
</dbReference>
<dbReference type="GO" id="GO:0019827">
    <property type="term" value="P:stem cell population maintenance"/>
    <property type="evidence" value="ECO:0000315"/>
    <property type="project" value="MGI"/>
</dbReference>
<dbReference type="CDD" id="cd01728">
    <property type="entry name" value="LSm1"/>
    <property type="match status" value="1"/>
</dbReference>
<dbReference type="FunFam" id="2.30.30.100:FF:000021">
    <property type="entry name" value="U6 snRNA-associated Sm-like protein LSm1"/>
    <property type="match status" value="1"/>
</dbReference>
<dbReference type="Gene3D" id="2.30.30.100">
    <property type="match status" value="1"/>
</dbReference>
<dbReference type="InterPro" id="IPR034104">
    <property type="entry name" value="Lsm1"/>
</dbReference>
<dbReference type="InterPro" id="IPR010920">
    <property type="entry name" value="LSM_dom_sf"/>
</dbReference>
<dbReference type="InterPro" id="IPR044642">
    <property type="entry name" value="PTHR15588"/>
</dbReference>
<dbReference type="InterPro" id="IPR047575">
    <property type="entry name" value="Sm"/>
</dbReference>
<dbReference type="InterPro" id="IPR001163">
    <property type="entry name" value="Sm_dom_euk/arc"/>
</dbReference>
<dbReference type="PANTHER" id="PTHR15588">
    <property type="entry name" value="LSM1"/>
    <property type="match status" value="1"/>
</dbReference>
<dbReference type="PANTHER" id="PTHR15588:SF8">
    <property type="entry name" value="U6 SNRNA-ASSOCIATED SM-LIKE PROTEIN LSM1"/>
    <property type="match status" value="1"/>
</dbReference>
<dbReference type="Pfam" id="PF01423">
    <property type="entry name" value="LSM"/>
    <property type="match status" value="1"/>
</dbReference>
<dbReference type="SMART" id="SM00651">
    <property type="entry name" value="Sm"/>
    <property type="match status" value="1"/>
</dbReference>
<dbReference type="SUPFAM" id="SSF50182">
    <property type="entry name" value="Sm-like ribonucleoproteins"/>
    <property type="match status" value="1"/>
</dbReference>
<dbReference type="PROSITE" id="PS52002">
    <property type="entry name" value="SM"/>
    <property type="match status" value="1"/>
</dbReference>
<accession>Q8VC85</accession>
<feature type="chain" id="PRO_0000125555" description="U6 snRNA-associated Sm-like protein LSm1">
    <location>
        <begin position="1"/>
        <end position="133"/>
    </location>
</feature>
<feature type="domain" description="Sm" evidence="3">
    <location>
        <begin position="5"/>
        <end position="80"/>
    </location>
</feature>
<feature type="modified residue" description="Phosphoserine" evidence="1">
    <location>
        <position position="123"/>
    </location>
</feature>
<feature type="modified residue" description="Phosphothreonine" evidence="1">
    <location>
        <position position="129"/>
    </location>
</feature>
<organism>
    <name type="scientific">Mus musculus</name>
    <name type="common">Mouse</name>
    <dbReference type="NCBI Taxonomy" id="10090"/>
    <lineage>
        <taxon>Eukaryota</taxon>
        <taxon>Metazoa</taxon>
        <taxon>Chordata</taxon>
        <taxon>Craniata</taxon>
        <taxon>Vertebrata</taxon>
        <taxon>Euteleostomi</taxon>
        <taxon>Mammalia</taxon>
        <taxon>Eutheria</taxon>
        <taxon>Euarchontoglires</taxon>
        <taxon>Glires</taxon>
        <taxon>Rodentia</taxon>
        <taxon>Myomorpha</taxon>
        <taxon>Muroidea</taxon>
        <taxon>Muridae</taxon>
        <taxon>Murinae</taxon>
        <taxon>Mus</taxon>
        <taxon>Mus</taxon>
    </lineage>
</organism>
<evidence type="ECO:0000250" key="1">
    <source>
        <dbReference type="UniProtKB" id="O15116"/>
    </source>
</evidence>
<evidence type="ECO:0000250" key="2">
    <source>
        <dbReference type="UniProtKB" id="P47017"/>
    </source>
</evidence>
<evidence type="ECO:0000255" key="3">
    <source>
        <dbReference type="PROSITE-ProRule" id="PRU01346"/>
    </source>
</evidence>
<evidence type="ECO:0000305" key="4"/>
<gene>
    <name type="primary">Lsm1</name>
</gene>
<sequence>MNYMPGTASLIEDIDKKHLVLLRDGRTLIGFLRSIDQFANLVLHQTVERIHVGKKYGDIPRGIFVVRGENVVLLGEIDLEKESDTPLQQVSIEEILEEQRVQQQTRLEAEKLKVQTLKDRGLSIPRADTLDEY</sequence>
<protein>
    <recommendedName>
        <fullName>U6 snRNA-associated Sm-like protein LSm1</fullName>
    </recommendedName>
</protein>
<name>LSM1_MOUSE</name>
<comment type="function">
    <text evidence="1 2">Plays a role in the degradation of histone mRNAs, the only eukaryotic mRNAs that are not polyadenylated (By similarity). Probably also part of an LSm subunits-containing complex involved in the general process of mRNA degradation (By similarity).</text>
</comment>
<comment type="subunit">
    <text evidence="1 2">Interacts with SLBP; interaction with SLBP occurs when histone mRNA is being rapidly degraded during the S phase (By similarity). LSm subunits form a heteromer with a donut shape (By similarity).</text>
</comment>
<comment type="interaction">
    <interactant intactId="EBI-16026183">
        <id>Q8VC85</id>
    </interactant>
    <interactant intactId="EBI-16026214">
        <id>Q7TMF2</id>
        <label>Eri1</label>
    </interactant>
    <organismsDiffer>false</organismsDiffer>
    <experiments>3</experiments>
</comment>
<comment type="subcellular location">
    <subcellularLocation>
        <location evidence="1">Cytoplasm</location>
    </subcellularLocation>
    <subcellularLocation>
        <location evidence="1">Cytoplasm</location>
        <location evidence="1">P-body</location>
    </subcellularLocation>
</comment>
<comment type="similarity">
    <text evidence="4">Belongs to the snRNP Sm proteins family.</text>
</comment>
<keyword id="KW-0963">Cytoplasm</keyword>
<keyword id="KW-0507">mRNA processing</keyword>
<keyword id="KW-0508">mRNA splicing</keyword>
<keyword id="KW-0597">Phosphoprotein</keyword>
<keyword id="KW-1185">Reference proteome</keyword>
<keyword id="KW-0687">Ribonucleoprotein</keyword>
<keyword id="KW-0694">RNA-binding</keyword>
<reference key="1">
    <citation type="journal article" date="2004" name="Genome Res.">
        <title>The status, quality, and expansion of the NIH full-length cDNA project: the Mammalian Gene Collection (MGC).</title>
        <authorList>
            <consortium name="The MGC Project Team"/>
        </authorList>
    </citation>
    <scope>NUCLEOTIDE SEQUENCE [LARGE SCALE MRNA]</scope>
    <source>
        <tissue>Liver</tissue>
    </source>
</reference>
<reference key="2">
    <citation type="journal article" date="2010" name="Cell">
        <title>A tissue-specific atlas of mouse protein phosphorylation and expression.</title>
        <authorList>
            <person name="Huttlin E.L."/>
            <person name="Jedrychowski M.P."/>
            <person name="Elias J.E."/>
            <person name="Goswami T."/>
            <person name="Rad R."/>
            <person name="Beausoleil S.A."/>
            <person name="Villen J."/>
            <person name="Haas W."/>
            <person name="Sowa M.E."/>
            <person name="Gygi S.P."/>
        </authorList>
    </citation>
    <scope>IDENTIFICATION BY MASS SPECTROMETRY [LARGE SCALE ANALYSIS]</scope>
    <source>
        <tissue>Brain</tissue>
        <tissue>Kidney</tissue>
        <tissue>Pancreas</tissue>
        <tissue>Testis</tissue>
    </source>
</reference>
<proteinExistence type="evidence at protein level"/>